<gene>
    <name evidence="1" type="primary">dnaA</name>
    <name type="ordered locus">TTHA1973</name>
</gene>
<accession>Q9X9D5</accession>
<accession>Q5SGV7</accession>
<organism>
    <name type="scientific">Thermus thermophilus (strain ATCC 27634 / DSM 579 / HB8)</name>
    <dbReference type="NCBI Taxonomy" id="300852"/>
    <lineage>
        <taxon>Bacteria</taxon>
        <taxon>Thermotogati</taxon>
        <taxon>Deinococcota</taxon>
        <taxon>Deinococci</taxon>
        <taxon>Thermales</taxon>
        <taxon>Thermaceae</taxon>
        <taxon>Thermus</taxon>
    </lineage>
</organism>
<reference key="1">
    <citation type="journal article" date="2000" name="J. Mol. Biol.">
        <title>Identification of the chromosomal replication origin from Thermus thermophilus and its interaction with the replication initiator DnaA.</title>
        <authorList>
            <person name="Schaper S."/>
            <person name="Nardmann J."/>
            <person name="Lueder G."/>
            <person name="Lurz R."/>
            <person name="Speck C."/>
            <person name="Messer W."/>
        </authorList>
    </citation>
    <scope>NUCLEOTIDE SEQUENCE [GENOMIC DNA]</scope>
    <scope>FUNCTION</scope>
    <scope>SLOW ATPASE ACTIVITY</scope>
    <scope>BIOPHYSICOCHEMICAL PROPERTIES</scope>
    <scope>DOMAIN</scope>
    <scope>DNA-BINDING</scope>
    <source>
        <strain>ATCC 27634 / DSM 579 / HB8</strain>
    </source>
</reference>
<reference key="2">
    <citation type="submission" date="2004-11" db="EMBL/GenBank/DDBJ databases">
        <title>Complete genome sequence of Thermus thermophilus HB8.</title>
        <authorList>
            <person name="Masui R."/>
            <person name="Kurokawa K."/>
            <person name="Nakagawa N."/>
            <person name="Tokunaga F."/>
            <person name="Koyama Y."/>
            <person name="Shibata T."/>
            <person name="Oshima T."/>
            <person name="Yokoyama S."/>
            <person name="Yasunaga T."/>
            <person name="Kuramitsu S."/>
        </authorList>
    </citation>
    <scope>NUCLEOTIDE SEQUENCE [LARGE SCALE GENOMIC DNA]</scope>
    <source>
        <strain>ATCC 27634 / DSM 579 / HB8</strain>
    </source>
</reference>
<sequence>MSHEAVWQHVLEHIRRSITEVEFHTWFERIRPLGIRDGVLELAVPTSFALDWIRRHYAGLIQEALGLLGAQAPRFELRVVPGVVVQEDIFQAAPAEAPRPKLNPKYTFENFVVGPNNSMAHAAAVAVAESPGRAYNPLFIYGGVGLGKTHLMHAVGHSVAKRFPHLRIEYVSTETFTNELINAIREDRMTEFRERYRSVDLLLVDDVQFIAGKERTQEEFFHTFNALYEAHKQIILSSDRPPKDILTLEARLRSRFEWGLITDIQPPDLETRIAILKMNAEQRGLRIPEDALEYIARQVTSNIRELEGALMRAIAFASLNGVELTRAVAAKALSDIFAPRELEADPLEIIRKVADHFGLKPEELTGSGRKKEVVLPRQLAMYLVRELTRASLPEIGQLFGGRDHTTVLYAIQKVQELAESDREVQGLLRTLREACT</sequence>
<proteinExistence type="evidence at protein level"/>
<comment type="function">
    <text evidence="1">Plays an essential role in the initiation and regulation of chromosomal replication. ATP-DnaA binds to the origin of replication (oriC) to initiate formation of the DNA replication initiation complex once per cell cycle. Binds the DnaA box (a 9 base pair repeat at the origin) and separates the double-stranded (ds)DNA. Forms a right-handed helical filament on oriC DNA; dsDNA binds to the exterior of the filament while single-stranded (ss)DNA is stabiized in the filament's interior. The ATP-DnaA-oriC complex binds and stabilizes one strand of the AT-rich DNA unwinding element (DUE), permitting loading of DNA polymerase. After initiation quickly degrades to an ADP-DnaA complex that is not apt for DNA replication. Binds acidic phospholipids.</text>
</comment>
<comment type="function">
    <text evidence="2">The DnaA box consensus is 5'-TTATC[CA]A[CA]A-3' in this bacterium; oriC consists of 13 clustered DnaA boxes and a 40 base pair AT-rich region. ATP-DnaA binds cooperatively to multiple DnaA boxes, while ADP-DnaA binds with low cooperativity to the individual DnaA boxes. About 16-18 DnaA protein molecules bind their sites in oriC. Has a slow ATPase activity. Binds linear and supercoiled DNA.</text>
</comment>
<comment type="catalytic activity">
    <reaction evidence="2">
        <text>ATP + H2O = ADP + phosphate + H(+)</text>
        <dbReference type="Rhea" id="RHEA:13065"/>
        <dbReference type="ChEBI" id="CHEBI:15377"/>
        <dbReference type="ChEBI" id="CHEBI:15378"/>
        <dbReference type="ChEBI" id="CHEBI:30616"/>
        <dbReference type="ChEBI" id="CHEBI:43474"/>
        <dbReference type="ChEBI" id="CHEBI:456216"/>
    </reaction>
</comment>
<comment type="biophysicochemical properties">
    <temperatureDependence>
        <text evidence="2">Optimum temperature is greater than 60 degrees Celsius, at higher temperatures in vitro DNA-binding became unstable.</text>
    </temperatureDependence>
</comment>
<comment type="subunit">
    <text evidence="1">Oligomerizes as a right-handed, spiral filament on DNA at oriC.</text>
</comment>
<comment type="subcellular location">
    <subcellularLocation>
        <location evidence="1">Cytoplasm</location>
    </subcellularLocation>
</comment>
<comment type="domain">
    <text evidence="1">Domain I is involved in oligomerization and binding regulators, domain II is flexibile and of varying length in different bacteria, domain III forms the AAA+ region, while domain IV binds dsDNA.</text>
</comment>
<comment type="similarity">
    <text evidence="1 3">Belongs to the DnaA family.</text>
</comment>
<keyword id="KW-0067">ATP-binding</keyword>
<keyword id="KW-0963">Cytoplasm</keyword>
<keyword id="KW-0235">DNA replication</keyword>
<keyword id="KW-0238">DNA-binding</keyword>
<keyword id="KW-0378">Hydrolase</keyword>
<keyword id="KW-0446">Lipid-binding</keyword>
<keyword id="KW-0547">Nucleotide-binding</keyword>
<keyword id="KW-1185">Reference proteome</keyword>
<protein>
    <recommendedName>
        <fullName evidence="1">Chromosomal replication initiator protein DnaA</fullName>
        <ecNumber evidence="2">3.6.4.-</ecNumber>
    </recommendedName>
</protein>
<dbReference type="EC" id="3.6.4.-" evidence="2"/>
<dbReference type="EMBL" id="AJ133785">
    <property type="protein sequence ID" value="CAB40110.1"/>
    <property type="molecule type" value="Genomic_DNA"/>
</dbReference>
<dbReference type="EMBL" id="AP008226">
    <property type="protein sequence ID" value="BAD71796.1"/>
    <property type="molecule type" value="Genomic_DNA"/>
</dbReference>
<dbReference type="RefSeq" id="WP_011229057.1">
    <property type="nucleotide sequence ID" value="NC_006461.1"/>
</dbReference>
<dbReference type="RefSeq" id="YP_145239.1">
    <property type="nucleotide sequence ID" value="NC_006461.1"/>
</dbReference>
<dbReference type="SMR" id="Q9X9D5"/>
<dbReference type="EnsemblBacteria" id="BAD71796">
    <property type="protein sequence ID" value="BAD71796"/>
    <property type="gene ID" value="BAD71796"/>
</dbReference>
<dbReference type="GeneID" id="3169856"/>
<dbReference type="KEGG" id="ttj:TTHA1973"/>
<dbReference type="PATRIC" id="fig|300852.9.peg.1944"/>
<dbReference type="eggNOG" id="COG0593">
    <property type="taxonomic scope" value="Bacteria"/>
</dbReference>
<dbReference type="HOGENOM" id="CLU_026910_3_1_0"/>
<dbReference type="PhylomeDB" id="Q9X9D5"/>
<dbReference type="Proteomes" id="UP000000532">
    <property type="component" value="Chromosome"/>
</dbReference>
<dbReference type="GO" id="GO:0005737">
    <property type="term" value="C:cytoplasm"/>
    <property type="evidence" value="ECO:0007669"/>
    <property type="project" value="UniProtKB-SubCell"/>
</dbReference>
<dbReference type="GO" id="GO:0005886">
    <property type="term" value="C:plasma membrane"/>
    <property type="evidence" value="ECO:0007669"/>
    <property type="project" value="TreeGrafter"/>
</dbReference>
<dbReference type="GO" id="GO:0005524">
    <property type="term" value="F:ATP binding"/>
    <property type="evidence" value="ECO:0007669"/>
    <property type="project" value="UniProtKB-UniRule"/>
</dbReference>
<dbReference type="GO" id="GO:0016887">
    <property type="term" value="F:ATP hydrolysis activity"/>
    <property type="evidence" value="ECO:0007669"/>
    <property type="project" value="InterPro"/>
</dbReference>
<dbReference type="GO" id="GO:0003688">
    <property type="term" value="F:DNA replication origin binding"/>
    <property type="evidence" value="ECO:0007669"/>
    <property type="project" value="UniProtKB-UniRule"/>
</dbReference>
<dbReference type="GO" id="GO:0008289">
    <property type="term" value="F:lipid binding"/>
    <property type="evidence" value="ECO:0007669"/>
    <property type="project" value="UniProtKB-KW"/>
</dbReference>
<dbReference type="GO" id="GO:0006270">
    <property type="term" value="P:DNA replication initiation"/>
    <property type="evidence" value="ECO:0007669"/>
    <property type="project" value="UniProtKB-UniRule"/>
</dbReference>
<dbReference type="GO" id="GO:0006275">
    <property type="term" value="P:regulation of DNA replication"/>
    <property type="evidence" value="ECO:0007669"/>
    <property type="project" value="UniProtKB-UniRule"/>
</dbReference>
<dbReference type="CDD" id="cd00009">
    <property type="entry name" value="AAA"/>
    <property type="match status" value="1"/>
</dbReference>
<dbReference type="CDD" id="cd06571">
    <property type="entry name" value="Bac_DnaA_C"/>
    <property type="match status" value="1"/>
</dbReference>
<dbReference type="FunFam" id="1.10.8.60:FF:000003">
    <property type="entry name" value="Chromosomal replication initiator protein DnaA"/>
    <property type="match status" value="1"/>
</dbReference>
<dbReference type="FunFam" id="3.40.50.300:FF:000150">
    <property type="entry name" value="Chromosomal replication initiator protein DnaA"/>
    <property type="match status" value="1"/>
</dbReference>
<dbReference type="Gene3D" id="1.10.1750.10">
    <property type="match status" value="1"/>
</dbReference>
<dbReference type="Gene3D" id="1.10.8.60">
    <property type="match status" value="1"/>
</dbReference>
<dbReference type="Gene3D" id="3.30.300.180">
    <property type="match status" value="1"/>
</dbReference>
<dbReference type="Gene3D" id="3.40.50.300">
    <property type="entry name" value="P-loop containing nucleotide triphosphate hydrolases"/>
    <property type="match status" value="1"/>
</dbReference>
<dbReference type="HAMAP" id="MF_00377">
    <property type="entry name" value="DnaA_bact"/>
    <property type="match status" value="1"/>
</dbReference>
<dbReference type="InterPro" id="IPR003593">
    <property type="entry name" value="AAA+_ATPase"/>
</dbReference>
<dbReference type="InterPro" id="IPR001957">
    <property type="entry name" value="Chromosome_initiator_DnaA"/>
</dbReference>
<dbReference type="InterPro" id="IPR020591">
    <property type="entry name" value="Chromosome_initiator_DnaA-like"/>
</dbReference>
<dbReference type="InterPro" id="IPR018312">
    <property type="entry name" value="Chromosome_initiator_DnaA_CS"/>
</dbReference>
<dbReference type="InterPro" id="IPR013159">
    <property type="entry name" value="DnaA_C"/>
</dbReference>
<dbReference type="InterPro" id="IPR013317">
    <property type="entry name" value="DnaA_dom"/>
</dbReference>
<dbReference type="InterPro" id="IPR024633">
    <property type="entry name" value="DnaA_N_dom"/>
</dbReference>
<dbReference type="InterPro" id="IPR038454">
    <property type="entry name" value="DnaA_N_sf"/>
</dbReference>
<dbReference type="InterPro" id="IPR027417">
    <property type="entry name" value="P-loop_NTPase"/>
</dbReference>
<dbReference type="InterPro" id="IPR010921">
    <property type="entry name" value="Trp_repressor/repl_initiator"/>
</dbReference>
<dbReference type="NCBIfam" id="TIGR00362">
    <property type="entry name" value="DnaA"/>
    <property type="match status" value="1"/>
</dbReference>
<dbReference type="PANTHER" id="PTHR30050">
    <property type="entry name" value="CHROMOSOMAL REPLICATION INITIATOR PROTEIN DNAA"/>
    <property type="match status" value="1"/>
</dbReference>
<dbReference type="PANTHER" id="PTHR30050:SF2">
    <property type="entry name" value="CHROMOSOMAL REPLICATION INITIATOR PROTEIN DNAA"/>
    <property type="match status" value="1"/>
</dbReference>
<dbReference type="Pfam" id="PF00308">
    <property type="entry name" value="Bac_DnaA"/>
    <property type="match status" value="1"/>
</dbReference>
<dbReference type="Pfam" id="PF08299">
    <property type="entry name" value="Bac_DnaA_C"/>
    <property type="match status" value="1"/>
</dbReference>
<dbReference type="Pfam" id="PF11638">
    <property type="entry name" value="DnaA_N"/>
    <property type="match status" value="1"/>
</dbReference>
<dbReference type="PRINTS" id="PR00051">
    <property type="entry name" value="DNAA"/>
</dbReference>
<dbReference type="SMART" id="SM00382">
    <property type="entry name" value="AAA"/>
    <property type="match status" value="1"/>
</dbReference>
<dbReference type="SMART" id="SM00760">
    <property type="entry name" value="Bac_DnaA_C"/>
    <property type="match status" value="1"/>
</dbReference>
<dbReference type="SUPFAM" id="SSF52540">
    <property type="entry name" value="P-loop containing nucleoside triphosphate hydrolases"/>
    <property type="match status" value="1"/>
</dbReference>
<dbReference type="SUPFAM" id="SSF48295">
    <property type="entry name" value="TrpR-like"/>
    <property type="match status" value="1"/>
</dbReference>
<dbReference type="PROSITE" id="PS01008">
    <property type="entry name" value="DNAA"/>
    <property type="match status" value="1"/>
</dbReference>
<feature type="chain" id="PRO_0000114288" description="Chromosomal replication initiator protein DnaA">
    <location>
        <begin position="1"/>
        <end position="436"/>
    </location>
</feature>
<feature type="region of interest" description="Domain I, interacts with DnaA modulators" evidence="1 4">
    <location>
        <begin position="1"/>
        <end position="80"/>
    </location>
</feature>
<feature type="region of interest" description="Domain II" evidence="1 4">
    <location>
        <begin position="80"/>
        <end position="100"/>
    </location>
</feature>
<feature type="region of interest" description="Domain III, AAA+ region" evidence="1 4">
    <location>
        <begin position="101"/>
        <end position="317"/>
    </location>
</feature>
<feature type="region of interest" description="Domain IV, binds dsDNA" evidence="1 4">
    <location>
        <begin position="318"/>
        <end position="436"/>
    </location>
</feature>
<feature type="binding site" evidence="1">
    <location>
        <position position="145"/>
    </location>
    <ligand>
        <name>ATP</name>
        <dbReference type="ChEBI" id="CHEBI:30616"/>
    </ligand>
</feature>
<feature type="binding site" evidence="1">
    <location>
        <position position="147"/>
    </location>
    <ligand>
        <name>ATP</name>
        <dbReference type="ChEBI" id="CHEBI:30616"/>
    </ligand>
</feature>
<feature type="binding site" evidence="1">
    <location>
        <position position="148"/>
    </location>
    <ligand>
        <name>ATP</name>
        <dbReference type="ChEBI" id="CHEBI:30616"/>
    </ligand>
</feature>
<feature type="binding site" evidence="1">
    <location>
        <position position="149"/>
    </location>
    <ligand>
        <name>ATP</name>
        <dbReference type="ChEBI" id="CHEBI:30616"/>
    </ligand>
</feature>
<name>DNAA_THET8</name>
<evidence type="ECO:0000255" key="1">
    <source>
        <dbReference type="HAMAP-Rule" id="MF_00377"/>
    </source>
</evidence>
<evidence type="ECO:0000269" key="2">
    <source>
    </source>
</evidence>
<evidence type="ECO:0000305" key="3"/>
<evidence type="ECO:0000305" key="4">
    <source>
    </source>
</evidence>